<protein>
    <recommendedName>
        <fullName>Auxin-responsive protein IAA10</fullName>
    </recommendedName>
    <alternativeName>
        <fullName>Indoleacetic acid-induced protein 10</fullName>
    </alternativeName>
</protein>
<organism>
    <name type="scientific">Arabidopsis thaliana</name>
    <name type="common">Mouse-ear cress</name>
    <dbReference type="NCBI Taxonomy" id="3702"/>
    <lineage>
        <taxon>Eukaryota</taxon>
        <taxon>Viridiplantae</taxon>
        <taxon>Streptophyta</taxon>
        <taxon>Embryophyta</taxon>
        <taxon>Tracheophyta</taxon>
        <taxon>Spermatophyta</taxon>
        <taxon>Magnoliopsida</taxon>
        <taxon>eudicotyledons</taxon>
        <taxon>Gunneridae</taxon>
        <taxon>Pentapetalae</taxon>
        <taxon>rosids</taxon>
        <taxon>malvids</taxon>
        <taxon>Brassicales</taxon>
        <taxon>Brassicaceae</taxon>
        <taxon>Camelineae</taxon>
        <taxon>Arabidopsis</taxon>
    </lineage>
</organism>
<sequence length="261" mass="27878">MNGLQEVCSSSGSVMIGLPAEEDENAAHSSEDSSCPDESVSETELDLALGLSIGRRKVRSSLSSSSSSLTRESGTKRSADSSPAAASNATRQVAVGWPPLRTYRINSLVNQAKSLATEGGLSSGIQKETTKSVVVAAKNDDACFIKSSRTSMLVKVTMDGVIIGRKVDLNALDSYAALEKTLDLMFFQIPSPVTRSNTQGYKTIKETCTSKLLDGSSEYIITYQDKDGDWMLVGDVPWQMFLGSVTRLRIMKTSIGAGVGK</sequence>
<dbReference type="EMBL" id="U18412">
    <property type="protein sequence ID" value="AAC49051.1"/>
    <property type="molecule type" value="mRNA"/>
</dbReference>
<dbReference type="EMBL" id="AC002411">
    <property type="protein sequence ID" value="AAC16750.1"/>
    <property type="molecule type" value="Genomic_DNA"/>
</dbReference>
<dbReference type="EMBL" id="CP002684">
    <property type="protein sequence ID" value="AEE27656.1"/>
    <property type="molecule type" value="Genomic_DNA"/>
</dbReference>
<dbReference type="EMBL" id="AF332396">
    <property type="protein sequence ID" value="AAG48760.1"/>
    <property type="molecule type" value="mRNA"/>
</dbReference>
<dbReference type="PIR" id="S58496">
    <property type="entry name" value="S58496"/>
</dbReference>
<dbReference type="RefSeq" id="NP_171906.1">
    <property type="nucleotide sequence ID" value="NM_100291.3"/>
</dbReference>
<dbReference type="PDB" id="5C7E">
    <property type="method" value="X-ray"/>
    <property type="resolution" value="3.10 A"/>
    <property type="chains" value="G/H/I/J/K/L=41-51"/>
</dbReference>
<dbReference type="PDBsum" id="5C7E"/>
<dbReference type="SMR" id="Q38828"/>
<dbReference type="BioGRID" id="24525">
    <property type="interactions" value="59"/>
</dbReference>
<dbReference type="ELM" id="Q38828"/>
<dbReference type="FunCoup" id="Q38828">
    <property type="interactions" value="290"/>
</dbReference>
<dbReference type="IntAct" id="Q38828">
    <property type="interactions" value="56"/>
</dbReference>
<dbReference type="STRING" id="3702.Q38828"/>
<dbReference type="PaxDb" id="3702-AT1G04100.1"/>
<dbReference type="EnsemblPlants" id="AT1G04100.1">
    <property type="protein sequence ID" value="AT1G04100.1"/>
    <property type="gene ID" value="AT1G04100"/>
</dbReference>
<dbReference type="GeneID" id="839290"/>
<dbReference type="Gramene" id="AT1G04100.1">
    <property type="protein sequence ID" value="AT1G04100.1"/>
    <property type="gene ID" value="AT1G04100"/>
</dbReference>
<dbReference type="KEGG" id="ath:AT1G04100"/>
<dbReference type="Araport" id="AT1G04100"/>
<dbReference type="TAIR" id="AT1G04100">
    <property type="gene designation" value="IAA10"/>
</dbReference>
<dbReference type="eggNOG" id="ENOG502R053">
    <property type="taxonomic scope" value="Eukaryota"/>
</dbReference>
<dbReference type="HOGENOM" id="CLU_049393_3_0_1"/>
<dbReference type="InParanoid" id="Q38828"/>
<dbReference type="OMA" id="MFFQIPS"/>
<dbReference type="PhylomeDB" id="Q38828"/>
<dbReference type="EvolutionaryTrace" id="Q38828"/>
<dbReference type="PRO" id="PR:Q38828"/>
<dbReference type="Proteomes" id="UP000006548">
    <property type="component" value="Chromosome 1"/>
</dbReference>
<dbReference type="ExpressionAtlas" id="Q38828">
    <property type="expression patterns" value="baseline and differential"/>
</dbReference>
<dbReference type="GO" id="GO:0005634">
    <property type="term" value="C:nucleus"/>
    <property type="evidence" value="ECO:0007669"/>
    <property type="project" value="UniProtKB-SubCell"/>
</dbReference>
<dbReference type="GO" id="GO:0003700">
    <property type="term" value="F:DNA-binding transcription factor activity"/>
    <property type="evidence" value="ECO:0000250"/>
    <property type="project" value="TAIR"/>
</dbReference>
<dbReference type="GO" id="GO:0042802">
    <property type="term" value="F:identical protein binding"/>
    <property type="evidence" value="ECO:0000353"/>
    <property type="project" value="IntAct"/>
</dbReference>
<dbReference type="GO" id="GO:0000976">
    <property type="term" value="F:transcription cis-regulatory region binding"/>
    <property type="evidence" value="ECO:0000353"/>
    <property type="project" value="TAIR"/>
</dbReference>
<dbReference type="GO" id="GO:0009734">
    <property type="term" value="P:auxin-activated signaling pathway"/>
    <property type="evidence" value="ECO:0007669"/>
    <property type="project" value="UniProtKB-KW"/>
</dbReference>
<dbReference type="GO" id="GO:0009733">
    <property type="term" value="P:response to auxin"/>
    <property type="evidence" value="ECO:0000304"/>
    <property type="project" value="TAIR"/>
</dbReference>
<dbReference type="Gene3D" id="3.10.20.90">
    <property type="entry name" value="Phosphatidylinositol 3-kinase Catalytic Subunit, Chain A, domain 1"/>
    <property type="match status" value="1"/>
</dbReference>
<dbReference type="InterPro" id="IPR033389">
    <property type="entry name" value="AUX/IAA_dom"/>
</dbReference>
<dbReference type="InterPro" id="IPR003311">
    <property type="entry name" value="AUX_IAA"/>
</dbReference>
<dbReference type="InterPro" id="IPR053793">
    <property type="entry name" value="PB1-like"/>
</dbReference>
<dbReference type="PANTHER" id="PTHR31734:SF136">
    <property type="entry name" value="AUXIN-RESPONSIVE PROTEIN IAA10"/>
    <property type="match status" value="1"/>
</dbReference>
<dbReference type="PANTHER" id="PTHR31734">
    <property type="entry name" value="AUXIN-RESPONSIVE PROTEIN IAA17"/>
    <property type="match status" value="1"/>
</dbReference>
<dbReference type="Pfam" id="PF02309">
    <property type="entry name" value="AUX_IAA"/>
    <property type="match status" value="1"/>
</dbReference>
<dbReference type="SUPFAM" id="SSF54277">
    <property type="entry name" value="CAD &amp; PB1 domains"/>
    <property type="match status" value="1"/>
</dbReference>
<dbReference type="PROSITE" id="PS51745">
    <property type="entry name" value="PB1"/>
    <property type="match status" value="1"/>
</dbReference>
<accession>Q38828</accession>
<feature type="chain" id="PRO_0000112841" description="Auxin-responsive protein IAA10">
    <location>
        <begin position="1"/>
        <end position="261"/>
    </location>
</feature>
<feature type="domain" description="PB1" evidence="2">
    <location>
        <begin position="151"/>
        <end position="253"/>
    </location>
</feature>
<feature type="region of interest" description="Disordered" evidence="3">
    <location>
        <begin position="1"/>
        <end position="43"/>
    </location>
</feature>
<feature type="region of interest" description="Disordered" evidence="3">
    <location>
        <begin position="62"/>
        <end position="90"/>
    </location>
</feature>
<feature type="short sequence motif" description="EAR-like (transcriptional repression)">
    <location>
        <begin position="45"/>
        <end position="49"/>
    </location>
</feature>
<feature type="compositionally biased region" description="Low complexity" evidence="3">
    <location>
        <begin position="80"/>
        <end position="89"/>
    </location>
</feature>
<proteinExistence type="evidence at protein level"/>
<reference key="1">
    <citation type="journal article" date="1995" name="J. Mol. Biol.">
        <title>The PS-IAA4/5-like family of early auxin-inducible mRNAs in Arabidopsis thaliana.</title>
        <authorList>
            <person name="Abel S."/>
            <person name="Nguyen M.D."/>
            <person name="Theologis A."/>
        </authorList>
    </citation>
    <scope>NUCLEOTIDE SEQUENCE [MRNA]</scope>
    <scope>TISSUE SPECIFICITY</scope>
    <scope>INDUCTION</scope>
    <source>
        <strain>cv. Columbia</strain>
    </source>
</reference>
<reference key="2">
    <citation type="journal article" date="2000" name="Nature">
        <title>Sequence and analysis of chromosome 1 of the plant Arabidopsis thaliana.</title>
        <authorList>
            <person name="Theologis A."/>
            <person name="Ecker J.R."/>
            <person name="Palm C.J."/>
            <person name="Federspiel N.A."/>
            <person name="Kaul S."/>
            <person name="White O."/>
            <person name="Alonso J."/>
            <person name="Altafi H."/>
            <person name="Araujo R."/>
            <person name="Bowman C.L."/>
            <person name="Brooks S.Y."/>
            <person name="Buehler E."/>
            <person name="Chan A."/>
            <person name="Chao Q."/>
            <person name="Chen H."/>
            <person name="Cheuk R.F."/>
            <person name="Chin C.W."/>
            <person name="Chung M.K."/>
            <person name="Conn L."/>
            <person name="Conway A.B."/>
            <person name="Conway A.R."/>
            <person name="Creasy T.H."/>
            <person name="Dewar K."/>
            <person name="Dunn P."/>
            <person name="Etgu P."/>
            <person name="Feldblyum T.V."/>
            <person name="Feng J.-D."/>
            <person name="Fong B."/>
            <person name="Fujii C.Y."/>
            <person name="Gill J.E."/>
            <person name="Goldsmith A.D."/>
            <person name="Haas B."/>
            <person name="Hansen N.F."/>
            <person name="Hughes B."/>
            <person name="Huizar L."/>
            <person name="Hunter J.L."/>
            <person name="Jenkins J."/>
            <person name="Johnson-Hopson C."/>
            <person name="Khan S."/>
            <person name="Khaykin E."/>
            <person name="Kim C.J."/>
            <person name="Koo H.L."/>
            <person name="Kremenetskaia I."/>
            <person name="Kurtz D.B."/>
            <person name="Kwan A."/>
            <person name="Lam B."/>
            <person name="Langin-Hooper S."/>
            <person name="Lee A."/>
            <person name="Lee J.M."/>
            <person name="Lenz C.A."/>
            <person name="Li J.H."/>
            <person name="Li Y.-P."/>
            <person name="Lin X."/>
            <person name="Liu S.X."/>
            <person name="Liu Z.A."/>
            <person name="Luros J.S."/>
            <person name="Maiti R."/>
            <person name="Marziali A."/>
            <person name="Militscher J."/>
            <person name="Miranda M."/>
            <person name="Nguyen M."/>
            <person name="Nierman W.C."/>
            <person name="Osborne B.I."/>
            <person name="Pai G."/>
            <person name="Peterson J."/>
            <person name="Pham P.K."/>
            <person name="Rizzo M."/>
            <person name="Rooney T."/>
            <person name="Rowley D."/>
            <person name="Sakano H."/>
            <person name="Salzberg S.L."/>
            <person name="Schwartz J.R."/>
            <person name="Shinn P."/>
            <person name="Southwick A.M."/>
            <person name="Sun H."/>
            <person name="Tallon L.J."/>
            <person name="Tambunga G."/>
            <person name="Toriumi M.J."/>
            <person name="Town C.D."/>
            <person name="Utterback T."/>
            <person name="Van Aken S."/>
            <person name="Vaysberg M."/>
            <person name="Vysotskaia V.S."/>
            <person name="Walker M."/>
            <person name="Wu D."/>
            <person name="Yu G."/>
            <person name="Fraser C.M."/>
            <person name="Venter J.C."/>
            <person name="Davis R.W."/>
        </authorList>
    </citation>
    <scope>NUCLEOTIDE SEQUENCE [LARGE SCALE GENOMIC DNA]</scope>
    <source>
        <strain>cv. Columbia</strain>
    </source>
</reference>
<reference key="3">
    <citation type="journal article" date="2017" name="Plant J.">
        <title>Araport11: a complete reannotation of the Arabidopsis thaliana reference genome.</title>
        <authorList>
            <person name="Cheng C.Y."/>
            <person name="Krishnakumar V."/>
            <person name="Chan A.P."/>
            <person name="Thibaud-Nissen F."/>
            <person name="Schobel S."/>
            <person name="Town C.D."/>
        </authorList>
    </citation>
    <scope>GENOME REANNOTATION</scope>
    <source>
        <strain>cv. Columbia</strain>
    </source>
</reference>
<reference key="4">
    <citation type="journal article" date="2003" name="Science">
        <title>Empirical analysis of transcriptional activity in the Arabidopsis genome.</title>
        <authorList>
            <person name="Yamada K."/>
            <person name="Lim J."/>
            <person name="Dale J.M."/>
            <person name="Chen H."/>
            <person name="Shinn P."/>
            <person name="Palm C.J."/>
            <person name="Southwick A.M."/>
            <person name="Wu H.C."/>
            <person name="Kim C.J."/>
            <person name="Nguyen M."/>
            <person name="Pham P.K."/>
            <person name="Cheuk R.F."/>
            <person name="Karlin-Newmann G."/>
            <person name="Liu S.X."/>
            <person name="Lam B."/>
            <person name="Sakano H."/>
            <person name="Wu T."/>
            <person name="Yu G."/>
            <person name="Miranda M."/>
            <person name="Quach H.L."/>
            <person name="Tripp M."/>
            <person name="Chang C.H."/>
            <person name="Lee J.M."/>
            <person name="Toriumi M.J."/>
            <person name="Chan M.M."/>
            <person name="Tang C.C."/>
            <person name="Onodera C.S."/>
            <person name="Deng J.M."/>
            <person name="Akiyama K."/>
            <person name="Ansari Y."/>
            <person name="Arakawa T."/>
            <person name="Banh J."/>
            <person name="Banno F."/>
            <person name="Bowser L."/>
            <person name="Brooks S.Y."/>
            <person name="Carninci P."/>
            <person name="Chao Q."/>
            <person name="Choy N."/>
            <person name="Enju A."/>
            <person name="Goldsmith A.D."/>
            <person name="Gurjal M."/>
            <person name="Hansen N.F."/>
            <person name="Hayashizaki Y."/>
            <person name="Johnson-Hopson C."/>
            <person name="Hsuan V.W."/>
            <person name="Iida K."/>
            <person name="Karnes M."/>
            <person name="Khan S."/>
            <person name="Koesema E."/>
            <person name="Ishida J."/>
            <person name="Jiang P.X."/>
            <person name="Jones T."/>
            <person name="Kawai J."/>
            <person name="Kamiya A."/>
            <person name="Meyers C."/>
            <person name="Nakajima M."/>
            <person name="Narusaka M."/>
            <person name="Seki M."/>
            <person name="Sakurai T."/>
            <person name="Satou M."/>
            <person name="Tamse R."/>
            <person name="Vaysberg M."/>
            <person name="Wallender E.K."/>
            <person name="Wong C."/>
            <person name="Yamamura Y."/>
            <person name="Yuan S."/>
            <person name="Shinozaki K."/>
            <person name="Davis R.W."/>
            <person name="Theologis A."/>
            <person name="Ecker J.R."/>
        </authorList>
    </citation>
    <scope>NUCLEOTIDE SEQUENCE [LARGE SCALE MRNA]</scope>
    <source>
        <strain>cv. Columbia</strain>
    </source>
</reference>
<reference key="5">
    <citation type="journal article" date="2002" name="Plant Mol. Biol.">
        <title>Genetics of Aux/IAA and ARF action in plant growth and development.</title>
        <authorList>
            <person name="Liscum E."/>
            <person name="Reed J.W."/>
        </authorList>
    </citation>
    <scope>GENE FAMILY</scope>
    <scope>NOMENCLATURE</scope>
    <scope>FUNCTION</scope>
</reference>
<reference key="6">
    <citation type="journal article" date="2004" name="Plant Cell">
        <title>Aux/IAA proteins contain a potent transcriptional repression domain.</title>
        <authorList>
            <person name="Tiwari S.B."/>
            <person name="Hagen G."/>
            <person name="Guilfoyle T.J."/>
        </authorList>
    </citation>
    <scope>TRANSCRIPTIONAL REPRESSION DOMAIN</scope>
</reference>
<gene>
    <name type="primary">IAA10</name>
    <name type="ordered locus">At1g04100</name>
    <name type="ORF">F20D22.13</name>
</gene>
<name>IAA10_ARATH</name>
<evidence type="ECO:0000250" key="1"/>
<evidence type="ECO:0000255" key="2">
    <source>
        <dbReference type="PROSITE-ProRule" id="PRU01081"/>
    </source>
</evidence>
<evidence type="ECO:0000256" key="3">
    <source>
        <dbReference type="SAM" id="MobiDB-lite"/>
    </source>
</evidence>
<evidence type="ECO:0000269" key="4">
    <source>
    </source>
</evidence>
<evidence type="ECO:0000269" key="5">
    <source>
    </source>
</evidence>
<evidence type="ECO:0000305" key="6"/>
<comment type="function">
    <text evidence="4">Aux/IAA proteins are short-lived transcriptional factors that function as repressors of early auxin response genes at low auxin concentrations. Repression is thought to result from the interaction with auxin response factors (ARFs), proteins that bind to the auxin-responsive promoter element (AuxRE). Formation of heterodimers with ARF proteins may alter their ability to modulate early auxin response genes expression.</text>
</comment>
<comment type="subunit">
    <text evidence="1">Homodimers and heterodimers.</text>
</comment>
<comment type="interaction">
    <interactant intactId="EBI-3946434">
        <id>Q38828</id>
    </interactant>
    <interactant intactId="EBI-3946783">
        <id>Q9C5W9</id>
        <label>ARF18</label>
    </interactant>
    <organismsDiffer>false</organismsDiffer>
    <experiments>8</experiments>
</comment>
<comment type="interaction">
    <interactant intactId="EBI-3946434">
        <id>Q38828</id>
    </interactant>
    <interactant intactId="EBI-529887">
        <id>Q8RYC8</id>
        <label>ARF19</label>
    </interactant>
    <organismsDiffer>false</organismsDiffer>
    <experiments>7</experiments>
</comment>
<comment type="interaction">
    <interactant intactId="EBI-3946434">
        <id>Q38828</id>
    </interactant>
    <interactant intactId="EBI-1799262">
        <id>Q94JM3</id>
        <label>ARF2</label>
    </interactant>
    <organismsDiffer>false</organismsDiffer>
    <experiments>6</experiments>
</comment>
<comment type="interaction">
    <interactant intactId="EBI-3946434">
        <id>Q38828</id>
    </interactant>
    <interactant intactId="EBI-3946762">
        <id>Q9XED8</id>
        <label>ARF9</label>
    </interactant>
    <organismsDiffer>false</organismsDiffer>
    <experiments>3</experiments>
</comment>
<comment type="interaction">
    <interactant intactId="EBI-3946434">
        <id>Q38828</id>
    </interactant>
    <interactant intactId="EBI-15192745">
        <id>Q9LST3</id>
        <label>At5g60142</label>
    </interactant>
    <organismsDiffer>false</organismsDiffer>
    <experiments>3</experiments>
</comment>
<comment type="interaction">
    <interactant intactId="EBI-3946434">
        <id>Q38828</id>
    </interactant>
    <interactant intactId="EBI-2298866">
        <id>Q9FPE8</id>
        <label>HHO3</label>
    </interactant>
    <organismsDiffer>false</organismsDiffer>
    <experiments>3</experiments>
</comment>
<comment type="interaction">
    <interactant intactId="EBI-3946434">
        <id>Q38828</id>
    </interactant>
    <interactant intactId="EBI-630505">
        <id>P49677</id>
        <label>IAA1</label>
    </interactant>
    <organismsDiffer>false</organismsDiffer>
    <experiments>10</experiments>
</comment>
<comment type="interaction">
    <interactant intactId="EBI-3946434">
        <id>Q38828</id>
    </interactant>
    <interactant intactId="EBI-3946434">
        <id>Q38828</id>
        <label>IAA10</label>
    </interactant>
    <organismsDiffer>false</organismsDiffer>
    <experiments>5</experiments>
</comment>
<comment type="interaction">
    <interactant intactId="EBI-3946434">
        <id>Q38828</id>
    </interactant>
    <interactant intactId="EBI-2367923">
        <id>Q38829</id>
        <label>IAA11</label>
    </interactant>
    <organismsDiffer>false</organismsDiffer>
    <experiments>6</experiments>
</comment>
<comment type="interaction">
    <interactant intactId="EBI-3946434">
        <id>Q38828</id>
    </interactant>
    <interactant intactId="EBI-617608">
        <id>Q38830</id>
        <label>IAA12</label>
    </interactant>
    <organismsDiffer>false</organismsDiffer>
    <experiments>5</experiments>
</comment>
<comment type="interaction">
    <interactant intactId="EBI-3946434">
        <id>Q38828</id>
    </interactant>
    <interactant intactId="EBI-1554143">
        <id>Q38831</id>
        <label>IAA13</label>
    </interactant>
    <organismsDiffer>false</organismsDiffer>
    <experiments>10</experiments>
</comment>
<comment type="interaction">
    <interactant intactId="EBI-3946434">
        <id>Q38828</id>
    </interactant>
    <interactant intactId="EBI-2295562">
        <id>Q38832</id>
        <label>IAA14</label>
    </interactant>
    <organismsDiffer>false</organismsDiffer>
    <experiments>3</experiments>
</comment>
<comment type="interaction">
    <interactant intactId="EBI-3946434">
        <id>Q38828</id>
    </interactant>
    <interactant intactId="EBI-25524519">
        <id>A0A2H1ZEF6</id>
        <label>IAA15</label>
    </interactant>
    <organismsDiffer>false</organismsDiffer>
    <experiments>5</experiments>
</comment>
<comment type="interaction">
    <interactant intactId="EBI-3946434">
        <id>Q38828</id>
    </interactant>
    <interactant intactId="EBI-632231">
        <id>O24407</id>
        <label>IAA16</label>
    </interactant>
    <organismsDiffer>false</organismsDiffer>
    <experiments>11</experiments>
</comment>
<comment type="interaction">
    <interactant intactId="EBI-3946434">
        <id>Q38828</id>
    </interactant>
    <interactant intactId="EBI-632243">
        <id>P93830</id>
        <label>IAA17</label>
    </interactant>
    <organismsDiffer>false</organismsDiffer>
    <experiments>9</experiments>
</comment>
<comment type="interaction">
    <interactant intactId="EBI-3946434">
        <id>Q38828</id>
    </interactant>
    <interactant intactId="EBI-2295525">
        <id>O24408</id>
        <label>IAA18</label>
    </interactant>
    <organismsDiffer>false</organismsDiffer>
    <experiments>5</experiments>
</comment>
<comment type="interaction">
    <interactant intactId="EBI-3946434">
        <id>Q38828</id>
    </interactant>
    <interactant intactId="EBI-632257">
        <id>O24409</id>
        <label>IAA19</label>
    </interactant>
    <organismsDiffer>false</organismsDiffer>
    <experiments>9</experiments>
</comment>
<comment type="interaction">
    <interactant intactId="EBI-3946434">
        <id>Q38828</id>
    </interactant>
    <interactant intactId="EBI-632343">
        <id>P49678</id>
        <label>IAA2</label>
    </interactant>
    <organismsDiffer>false</organismsDiffer>
    <experiments>12</experiments>
</comment>
<comment type="interaction">
    <interactant intactId="EBI-3946434">
        <id>Q38828</id>
    </interactant>
    <interactant intactId="EBI-632272">
        <id>O24410</id>
        <label>IAA20</label>
    </interactant>
    <organismsDiffer>false</organismsDiffer>
    <experiments>5</experiments>
</comment>
<comment type="interaction">
    <interactant intactId="EBI-3946434">
        <id>Q38828</id>
    </interactant>
    <interactant intactId="EBI-3947418">
        <id>Q8LAL2</id>
        <label>IAA26</label>
    </interactant>
    <organismsDiffer>false</organismsDiffer>
    <experiments>10</experiments>
</comment>
<comment type="interaction">
    <interactant intactId="EBI-3946434">
        <id>Q38828</id>
    </interactant>
    <interactant intactId="EBI-3946677">
        <id>Q9ZSY8</id>
        <label>IAA27</label>
    </interactant>
    <organismsDiffer>false</organismsDiffer>
    <experiments>9</experiments>
</comment>
<comment type="interaction">
    <interactant intactId="EBI-3946434">
        <id>Q38828</id>
    </interactant>
    <interactant intactId="EBI-3133404">
        <id>Q9XFM0</id>
        <label>IAA28</label>
    </interactant>
    <organismsDiffer>false</organismsDiffer>
    <experiments>10</experiments>
</comment>
<comment type="interaction">
    <interactant intactId="EBI-3946434">
        <id>Q38828</id>
    </interactant>
    <interactant intactId="EBI-307174">
        <id>Q38822</id>
        <label>IAA3</label>
    </interactant>
    <organismsDiffer>false</organismsDiffer>
    <experiments>10</experiments>
</comment>
<comment type="interaction">
    <interactant intactId="EBI-3946434">
        <id>Q38828</id>
    </interactant>
    <interactant intactId="EBI-3946408">
        <id>Q8H174</id>
        <label>IAA31</label>
    </interactant>
    <organismsDiffer>false</organismsDiffer>
    <experiments>8</experiments>
</comment>
<comment type="interaction">
    <interactant intactId="EBI-3946434">
        <id>Q38828</id>
    </interactant>
    <interactant intactId="EBI-3946448">
        <id>Q8RYC6</id>
        <label>IAA32</label>
    </interactant>
    <organismsDiffer>false</organismsDiffer>
    <experiments>5</experiments>
</comment>
<comment type="interaction">
    <interactant intactId="EBI-3946434">
        <id>Q38828</id>
    </interactant>
    <interactant intactId="EBI-3946739">
        <id>Q9FKM7</id>
        <label>IAA33</label>
    </interactant>
    <organismsDiffer>false</organismsDiffer>
    <experiments>6</experiments>
</comment>
<comment type="interaction">
    <interactant intactId="EBI-3946434">
        <id>Q38828</id>
    </interactant>
    <interactant intactId="EBI-3946459">
        <id>Q9C5X0</id>
        <label>IAA34</label>
    </interactant>
    <organismsDiffer>false</organismsDiffer>
    <experiments>11</experiments>
</comment>
<comment type="interaction">
    <interactant intactId="EBI-3946434">
        <id>Q38828</id>
    </interactant>
    <interactant intactId="EBI-632187">
        <id>P33077</id>
        <label>IAA4</label>
    </interactant>
    <organismsDiffer>false</organismsDiffer>
    <experiments>10</experiments>
</comment>
<comment type="interaction">
    <interactant intactId="EBI-3946434">
        <id>Q38828</id>
    </interactant>
    <interactant intactId="EBI-3946487">
        <id>P33078</id>
        <label>IAA5</label>
    </interactant>
    <organismsDiffer>false</organismsDiffer>
    <experiments>6</experiments>
</comment>
<comment type="interaction">
    <interactant intactId="EBI-3946434">
        <id>Q38828</id>
    </interactant>
    <interactant intactId="EBI-1554124">
        <id>Q38824</id>
        <label>IAA6</label>
    </interactant>
    <organismsDiffer>false</organismsDiffer>
    <experiments>9</experiments>
</comment>
<comment type="interaction">
    <interactant intactId="EBI-3946434">
        <id>Q38828</id>
    </interactant>
    <interactant intactId="EBI-602959">
        <id>Q38825</id>
        <label>IAA7</label>
    </interactant>
    <organismsDiffer>false</organismsDiffer>
    <experiments>4</experiments>
</comment>
<comment type="interaction">
    <interactant intactId="EBI-3946434">
        <id>Q38828</id>
    </interactant>
    <interactant intactId="EBI-632200">
        <id>Q38826</id>
        <label>IAA8</label>
    </interactant>
    <organismsDiffer>false</organismsDiffer>
    <experiments>7</experiments>
</comment>
<comment type="interaction">
    <interactant intactId="EBI-3946434">
        <id>Q38828</id>
    </interactant>
    <interactant intactId="EBI-632216">
        <id>Q38827</id>
        <label>IAA9</label>
    </interactant>
    <organismsDiffer>false</organismsDiffer>
    <experiments>4</experiments>
</comment>
<comment type="interaction">
    <interactant intactId="EBI-3946434">
        <id>Q38828</id>
    </interactant>
    <interactant intactId="EBI-4425826">
        <id>Q8LA53</id>
        <label>MBD2</label>
    </interactant>
    <organismsDiffer>false</organismsDiffer>
    <experiments>4</experiments>
</comment>
<comment type="interaction">
    <interactant intactId="EBI-3946434">
        <id>Q38828</id>
    </interactant>
    <interactant intactId="EBI-25506855">
        <id>O23160</id>
        <label>MYB73</label>
    </interactant>
    <organismsDiffer>false</organismsDiffer>
    <experiments>3</experiments>
</comment>
<comment type="interaction">
    <interactant intactId="EBI-3946434">
        <id>Q38828</id>
    </interactant>
    <interactant intactId="EBI-4426144">
        <id>Q9C9L2</id>
        <label>TCP15</label>
    </interactant>
    <organismsDiffer>false</organismsDiffer>
    <experiments>3</experiments>
</comment>
<comment type="interaction">
    <interactant intactId="EBI-3946434">
        <id>Q38828</id>
    </interactant>
    <interactant intactId="EBI-4426168">
        <id>Q9FTA2</id>
        <label>TCP21</label>
    </interactant>
    <organismsDiffer>false</organismsDiffer>
    <experiments>3</experiments>
</comment>
<comment type="interaction">
    <interactant intactId="EBI-3946434">
        <id>Q38828</id>
    </interactant>
    <interactant intactId="EBI-25522447">
        <id>Q9MAH8</id>
        <label>TCP3</label>
    </interactant>
    <organismsDiffer>false</organismsDiffer>
    <experiments>3</experiments>
</comment>
<comment type="subcellular location">
    <subcellularLocation>
        <location evidence="1">Nucleus</location>
    </subcellularLocation>
</comment>
<comment type="tissue specificity">
    <text evidence="5">Preferentially expressed in vegetative organs.</text>
</comment>
<comment type="induction">
    <text evidence="5">By auxin.</text>
</comment>
<comment type="domain">
    <text>The N-terminal half of the protein contains two conserved domains I and II. Domain I includes a slightly degenerated ERF-associated amphiphilic repression (EAR) motif which seems to be involved in the activity of transcriptional repression. Domain II is required for the correct degradation of the protein through the SCF-mediated ubiquitin-proteasome pathway. Interactions between Aux/IAA proteins and auxin response factors (ARFs) occur through their C-terminal dimerization domains III and IV.</text>
</comment>
<comment type="similarity">
    <text evidence="6">Belongs to the Aux/IAA family.</text>
</comment>
<keyword id="KW-0002">3D-structure</keyword>
<keyword id="KW-0927">Auxin signaling pathway</keyword>
<keyword id="KW-0539">Nucleus</keyword>
<keyword id="KW-1185">Reference proteome</keyword>
<keyword id="KW-0678">Repressor</keyword>
<keyword id="KW-0804">Transcription</keyword>
<keyword id="KW-0805">Transcription regulation</keyword>